<organism>
    <name type="scientific">Salmonella paratyphi C (strain RKS4594)</name>
    <dbReference type="NCBI Taxonomy" id="476213"/>
    <lineage>
        <taxon>Bacteria</taxon>
        <taxon>Pseudomonadati</taxon>
        <taxon>Pseudomonadota</taxon>
        <taxon>Gammaproteobacteria</taxon>
        <taxon>Enterobacterales</taxon>
        <taxon>Enterobacteriaceae</taxon>
        <taxon>Salmonella</taxon>
    </lineage>
</organism>
<protein>
    <recommendedName>
        <fullName evidence="1">RNA-binding protein Hfq</fullName>
    </recommendedName>
</protein>
<name>HFQ_SALPC</name>
<comment type="function">
    <text evidence="1">RNA chaperone that binds small regulatory RNA (sRNAs) and mRNAs to facilitate mRNA translational regulation in response to envelope stress, environmental stress and changes in metabolite concentrations. Also binds with high specificity to tRNAs.</text>
</comment>
<comment type="subunit">
    <text evidence="1">Homohexamer.</text>
</comment>
<comment type="similarity">
    <text evidence="1">Belongs to the Hfq family.</text>
</comment>
<keyword id="KW-0694">RNA-binding</keyword>
<keyword id="KW-0346">Stress response</keyword>
<accession>C0Q6C9</accession>
<sequence length="102" mass="11133">MAKGQSLQDPFLNALRRERVPVSIYLVNGIKLQGQIESFDQFVILLKNTVSQMVYKHAISTVVPSRPVSHHSNNAGGGASNNYHHGSNAQGSTAQQDSEETE</sequence>
<gene>
    <name evidence="1" type="primary">hfq</name>
    <name type="ordered locus">SPC_4508</name>
</gene>
<proteinExistence type="inferred from homology"/>
<reference key="1">
    <citation type="journal article" date="2009" name="PLoS ONE">
        <title>Salmonella paratyphi C: genetic divergence from Salmonella choleraesuis and pathogenic convergence with Salmonella typhi.</title>
        <authorList>
            <person name="Liu W.-Q."/>
            <person name="Feng Y."/>
            <person name="Wang Y."/>
            <person name="Zou Q.-H."/>
            <person name="Chen F."/>
            <person name="Guo J.-T."/>
            <person name="Peng Y.-H."/>
            <person name="Jin Y."/>
            <person name="Li Y.-G."/>
            <person name="Hu S.-N."/>
            <person name="Johnston R.N."/>
            <person name="Liu G.-R."/>
            <person name="Liu S.-L."/>
        </authorList>
    </citation>
    <scope>NUCLEOTIDE SEQUENCE [LARGE SCALE GENOMIC DNA]</scope>
    <source>
        <strain>RKS4594</strain>
    </source>
</reference>
<evidence type="ECO:0000255" key="1">
    <source>
        <dbReference type="HAMAP-Rule" id="MF_00436"/>
    </source>
</evidence>
<evidence type="ECO:0000255" key="2">
    <source>
        <dbReference type="PROSITE-ProRule" id="PRU01346"/>
    </source>
</evidence>
<evidence type="ECO:0000256" key="3">
    <source>
        <dbReference type="SAM" id="MobiDB-lite"/>
    </source>
</evidence>
<dbReference type="EMBL" id="CP000857">
    <property type="protein sequence ID" value="ACN48559.1"/>
    <property type="molecule type" value="Genomic_DNA"/>
</dbReference>
<dbReference type="RefSeq" id="WP_001051875.1">
    <property type="nucleotide sequence ID" value="NC_012125.1"/>
</dbReference>
<dbReference type="SMR" id="C0Q6C9"/>
<dbReference type="KEGG" id="sei:SPC_4508"/>
<dbReference type="HOGENOM" id="CLU_113688_2_1_6"/>
<dbReference type="Proteomes" id="UP000001599">
    <property type="component" value="Chromosome"/>
</dbReference>
<dbReference type="GO" id="GO:0005829">
    <property type="term" value="C:cytosol"/>
    <property type="evidence" value="ECO:0007669"/>
    <property type="project" value="TreeGrafter"/>
</dbReference>
<dbReference type="GO" id="GO:0003723">
    <property type="term" value="F:RNA binding"/>
    <property type="evidence" value="ECO:0007669"/>
    <property type="project" value="UniProtKB-UniRule"/>
</dbReference>
<dbReference type="GO" id="GO:0006355">
    <property type="term" value="P:regulation of DNA-templated transcription"/>
    <property type="evidence" value="ECO:0007669"/>
    <property type="project" value="InterPro"/>
</dbReference>
<dbReference type="GO" id="GO:0043487">
    <property type="term" value="P:regulation of RNA stability"/>
    <property type="evidence" value="ECO:0007669"/>
    <property type="project" value="TreeGrafter"/>
</dbReference>
<dbReference type="GO" id="GO:0045974">
    <property type="term" value="P:regulation of translation, ncRNA-mediated"/>
    <property type="evidence" value="ECO:0007669"/>
    <property type="project" value="TreeGrafter"/>
</dbReference>
<dbReference type="CDD" id="cd01716">
    <property type="entry name" value="Hfq"/>
    <property type="match status" value="1"/>
</dbReference>
<dbReference type="FunFam" id="2.30.30.100:FF:000001">
    <property type="entry name" value="RNA-binding protein Hfq"/>
    <property type="match status" value="1"/>
</dbReference>
<dbReference type="Gene3D" id="2.30.30.100">
    <property type="match status" value="1"/>
</dbReference>
<dbReference type="HAMAP" id="MF_00436">
    <property type="entry name" value="Hfq"/>
    <property type="match status" value="1"/>
</dbReference>
<dbReference type="InterPro" id="IPR005001">
    <property type="entry name" value="Hfq"/>
</dbReference>
<dbReference type="InterPro" id="IPR010920">
    <property type="entry name" value="LSM_dom_sf"/>
</dbReference>
<dbReference type="InterPro" id="IPR047575">
    <property type="entry name" value="Sm"/>
</dbReference>
<dbReference type="NCBIfam" id="TIGR02383">
    <property type="entry name" value="Hfq"/>
    <property type="match status" value="1"/>
</dbReference>
<dbReference type="NCBIfam" id="NF001602">
    <property type="entry name" value="PRK00395.1"/>
    <property type="match status" value="1"/>
</dbReference>
<dbReference type="PANTHER" id="PTHR34772">
    <property type="entry name" value="RNA-BINDING PROTEIN HFQ"/>
    <property type="match status" value="1"/>
</dbReference>
<dbReference type="PANTHER" id="PTHR34772:SF1">
    <property type="entry name" value="RNA-BINDING PROTEIN HFQ"/>
    <property type="match status" value="1"/>
</dbReference>
<dbReference type="Pfam" id="PF17209">
    <property type="entry name" value="Hfq"/>
    <property type="match status" value="1"/>
</dbReference>
<dbReference type="SUPFAM" id="SSF50182">
    <property type="entry name" value="Sm-like ribonucleoproteins"/>
    <property type="match status" value="1"/>
</dbReference>
<dbReference type="PROSITE" id="PS52002">
    <property type="entry name" value="SM"/>
    <property type="match status" value="1"/>
</dbReference>
<feature type="chain" id="PRO_1000135041" description="RNA-binding protein Hfq">
    <location>
        <begin position="1"/>
        <end position="102"/>
    </location>
</feature>
<feature type="domain" description="Sm" evidence="2">
    <location>
        <begin position="9"/>
        <end position="68"/>
    </location>
</feature>
<feature type="region of interest" description="Disordered" evidence="3">
    <location>
        <begin position="63"/>
        <end position="102"/>
    </location>
</feature>
<feature type="compositionally biased region" description="Low complexity" evidence="3">
    <location>
        <begin position="70"/>
        <end position="88"/>
    </location>
</feature>